<feature type="chain" id="PRO_0000167671" description="Ferredoxin-thioredoxin reductase, catalytic chain">
    <location>
        <begin position="1"/>
        <end position="111"/>
    </location>
</feature>
<feature type="active site" description="Nucleophile" evidence="1">
    <location>
        <position position="54"/>
    </location>
</feature>
<feature type="binding site" evidence="1">
    <location>
        <position position="52"/>
    </location>
    <ligand>
        <name>[4Fe-4S] cluster</name>
        <dbReference type="ChEBI" id="CHEBI:49883"/>
    </ligand>
</feature>
<feature type="binding site" evidence="1">
    <location>
        <position position="71"/>
    </location>
    <ligand>
        <name>[4Fe-4S] cluster</name>
        <dbReference type="ChEBI" id="CHEBI:49883"/>
    </ligand>
</feature>
<feature type="binding site" evidence="1">
    <location>
        <position position="73"/>
    </location>
    <ligand>
        <name>[4Fe-4S] cluster</name>
        <dbReference type="ChEBI" id="CHEBI:49883"/>
    </ligand>
</feature>
<feature type="binding site" evidence="1">
    <location>
        <position position="82"/>
    </location>
    <ligand>
        <name>[4Fe-4S] cluster</name>
        <dbReference type="ChEBI" id="CHEBI:49883"/>
    </ligand>
</feature>
<feature type="site" description="Increases the nucleophilicity of the active site Cys" evidence="1">
    <location>
        <position position="83"/>
    </location>
</feature>
<feature type="disulfide bond" description="Redox-active" evidence="1">
    <location>
        <begin position="54"/>
        <end position="84"/>
    </location>
</feature>
<dbReference type="EC" id="1.8.7.2"/>
<dbReference type="EMBL" id="AF022186">
    <property type="protein sequence ID" value="AAF13004.1"/>
    <property type="molecule type" value="Genomic_DNA"/>
</dbReference>
<dbReference type="RefSeq" id="NP_045042.1">
    <property type="nucleotide sequence ID" value="NC_001840.1"/>
</dbReference>
<dbReference type="SMR" id="Q9TM25"/>
<dbReference type="GeneID" id="800142"/>
<dbReference type="GO" id="GO:0009507">
    <property type="term" value="C:chloroplast"/>
    <property type="evidence" value="ECO:0007669"/>
    <property type="project" value="UniProtKB-SubCell"/>
</dbReference>
<dbReference type="GO" id="GO:0051539">
    <property type="term" value="F:4 iron, 4 sulfur cluster binding"/>
    <property type="evidence" value="ECO:0000250"/>
    <property type="project" value="UniProtKB"/>
</dbReference>
<dbReference type="GO" id="GO:0009055">
    <property type="term" value="F:electron transfer activity"/>
    <property type="evidence" value="ECO:0000250"/>
    <property type="project" value="UniProtKB"/>
</dbReference>
<dbReference type="GO" id="GO:0046872">
    <property type="term" value="F:metal ion binding"/>
    <property type="evidence" value="ECO:0007669"/>
    <property type="project" value="UniProtKB-KW"/>
</dbReference>
<dbReference type="GO" id="GO:0016730">
    <property type="term" value="F:oxidoreductase activity, acting on iron-sulfur proteins as donors"/>
    <property type="evidence" value="ECO:0007669"/>
    <property type="project" value="InterPro"/>
</dbReference>
<dbReference type="FunFam" id="3.90.460.10:FF:000001">
    <property type="entry name" value="Ferredoxin-thioredoxin reductase, catalytic chain"/>
    <property type="match status" value="1"/>
</dbReference>
<dbReference type="Gene3D" id="3.90.460.10">
    <property type="entry name" value="Ferredoxin thioredoxin reductase catalytic beta subunit"/>
    <property type="match status" value="1"/>
</dbReference>
<dbReference type="InterPro" id="IPR004209">
    <property type="entry name" value="FTR_bsu"/>
</dbReference>
<dbReference type="InterPro" id="IPR024707">
    <property type="entry name" value="FTR_bsu_Cyanobacter"/>
</dbReference>
<dbReference type="InterPro" id="IPR036644">
    <property type="entry name" value="FTR_bsu_sf"/>
</dbReference>
<dbReference type="PANTHER" id="PTHR35113">
    <property type="entry name" value="FERREDOXIN-THIOREDOXIN REDUCTASE CATALYTIC CHAIN, CHLOROPLASTIC"/>
    <property type="match status" value="1"/>
</dbReference>
<dbReference type="PANTHER" id="PTHR35113:SF1">
    <property type="entry name" value="FERREDOXIN-THIOREDOXIN REDUCTASE CATALYTIC CHAIN, CHLOROPLASTIC"/>
    <property type="match status" value="1"/>
</dbReference>
<dbReference type="Pfam" id="PF02943">
    <property type="entry name" value="FeThRed_B"/>
    <property type="match status" value="1"/>
</dbReference>
<dbReference type="PIRSF" id="PIRSF000260">
    <property type="entry name" value="FTRc"/>
    <property type="match status" value="1"/>
</dbReference>
<dbReference type="SUPFAM" id="SSF57662">
    <property type="entry name" value="Ferredoxin thioredoxin reductase (FTR), catalytic beta chain"/>
    <property type="match status" value="1"/>
</dbReference>
<geneLocation type="chloroplast"/>
<name>FTRC_CYACA</name>
<accession>Q9TM25</accession>
<evidence type="ECO:0000250" key="1"/>
<evidence type="ECO:0000305" key="2"/>
<organism>
    <name type="scientific">Cyanidium caldarium</name>
    <name type="common">Red alga</name>
    <dbReference type="NCBI Taxonomy" id="2771"/>
    <lineage>
        <taxon>Eukaryota</taxon>
        <taxon>Rhodophyta</taxon>
        <taxon>Bangiophyceae</taxon>
        <taxon>Cyanidiales</taxon>
        <taxon>Cyanidiaceae</taxon>
        <taxon>Cyanidium</taxon>
    </lineage>
</organism>
<reference key="1">
    <citation type="journal article" date="2000" name="J. Mol. Evol.">
        <title>The structure and gene repertoire of an ancient red algal plastid genome.</title>
        <authorList>
            <person name="Gloeckner G."/>
            <person name="Rosenthal A."/>
            <person name="Valentin K.-U."/>
        </authorList>
    </citation>
    <scope>NUCLEOTIDE SEQUENCE [LARGE SCALE GENOMIC DNA]</scope>
    <source>
        <strain>RK-1</strain>
    </source>
</reference>
<comment type="function">
    <text evidence="1">Catalytic subunit of the ferredoxin-thioredoxin reductase (FTR), which catalyzes the two-electron reduction of thioredoxins by the electrons provided by reduced ferredoxin.</text>
</comment>
<comment type="catalytic activity">
    <reaction>
        <text>[thioredoxin]-disulfide + 2 reduced [2Fe-2S]-[ferredoxin] + 2 H(+) = [thioredoxin]-dithiol + 2 oxidized [2Fe-2S]-[ferredoxin]</text>
        <dbReference type="Rhea" id="RHEA:42336"/>
        <dbReference type="Rhea" id="RHEA-COMP:10000"/>
        <dbReference type="Rhea" id="RHEA-COMP:10001"/>
        <dbReference type="Rhea" id="RHEA-COMP:10698"/>
        <dbReference type="Rhea" id="RHEA-COMP:10700"/>
        <dbReference type="ChEBI" id="CHEBI:15378"/>
        <dbReference type="ChEBI" id="CHEBI:29950"/>
        <dbReference type="ChEBI" id="CHEBI:33737"/>
        <dbReference type="ChEBI" id="CHEBI:33738"/>
        <dbReference type="ChEBI" id="CHEBI:50058"/>
        <dbReference type="EC" id="1.8.7.2"/>
    </reaction>
</comment>
<comment type="cofactor">
    <cofactor evidence="1">
        <name>[4Fe-4S] cluster</name>
        <dbReference type="ChEBI" id="CHEBI:49883"/>
    </cofactor>
    <text evidence="1">Binds 1 [4Fe-4S] cluster.</text>
</comment>
<comment type="subunit">
    <text evidence="1">Heterodimer of subunit A (variable subunit) and subunit B (catalytic subunit). Heterodimeric FTR forms a complex with ferredoxin and thioredoxin (By similarity).</text>
</comment>
<comment type="subcellular location">
    <subcellularLocation>
        <location>Plastid</location>
        <location>Chloroplast</location>
    </subcellularLocation>
</comment>
<comment type="similarity">
    <text evidence="2">Belongs to the ferredoxin thioredoxin reductase beta subunit family.</text>
</comment>
<sequence length="111" mass="12867">MRKTPKNLESLHKFAEAYAKLSRTYFCIDQSITALVIEGLARHKDDYGAPLCPCRHYENKKTEVLAAYWNCPCVPMRERKECHCMLFLQPSNEFSGESQLISKDDLQKHLS</sequence>
<gene>
    <name type="primary">ftrB</name>
</gene>
<keyword id="KW-0004">4Fe-4S</keyword>
<keyword id="KW-0150">Chloroplast</keyword>
<keyword id="KW-1015">Disulfide bond</keyword>
<keyword id="KW-0408">Iron</keyword>
<keyword id="KW-0411">Iron-sulfur</keyword>
<keyword id="KW-0479">Metal-binding</keyword>
<keyword id="KW-0560">Oxidoreductase</keyword>
<keyword id="KW-0934">Plastid</keyword>
<keyword id="KW-0676">Redox-active center</keyword>
<proteinExistence type="inferred from homology"/>
<protein>
    <recommendedName>
        <fullName>Ferredoxin-thioredoxin reductase, catalytic chain</fullName>
        <shortName>FTR-C</shortName>
        <ecNumber>1.8.7.2</ecNumber>
    </recommendedName>
    <alternativeName>
        <fullName>Ferredoxin-thioredoxin reductase subunit B</fullName>
        <shortName>FTR-B</shortName>
    </alternativeName>
</protein>